<reference key="1">
    <citation type="journal article" date="2003" name="Proc. Natl. Acad. Sci. U.S.A.">
        <title>The genome sequence of Clostridium tetani, the causative agent of tetanus disease.</title>
        <authorList>
            <person name="Brueggemann H."/>
            <person name="Baeumer S."/>
            <person name="Fricke W.F."/>
            <person name="Wiezer A."/>
            <person name="Liesegang H."/>
            <person name="Decker I."/>
            <person name="Herzberg C."/>
            <person name="Martinez-Arias R."/>
            <person name="Merkl R."/>
            <person name="Henne A."/>
            <person name="Gottschalk G."/>
        </authorList>
    </citation>
    <scope>NUCLEOTIDE SEQUENCE [LARGE SCALE GENOMIC DNA]</scope>
    <source>
        <strain>Massachusetts / E88</strain>
    </source>
</reference>
<feature type="chain" id="PRO_0000132372" description="Small ribosomal subunit protein uS4">
    <location>
        <begin position="1"/>
        <end position="206"/>
    </location>
</feature>
<feature type="domain" description="S4 RNA-binding" evidence="1">
    <location>
        <begin position="98"/>
        <end position="164"/>
    </location>
</feature>
<evidence type="ECO:0000255" key="1">
    <source>
        <dbReference type="HAMAP-Rule" id="MF_01306"/>
    </source>
</evidence>
<evidence type="ECO:0000305" key="2"/>
<name>RS4_CLOTE</name>
<gene>
    <name evidence="1" type="primary">rpsD</name>
    <name type="ordered locus">CTC_02579</name>
</gene>
<comment type="function">
    <text evidence="1">One of the primary rRNA binding proteins, it binds directly to 16S rRNA where it nucleates assembly of the body of the 30S subunit.</text>
</comment>
<comment type="function">
    <text evidence="1">With S5 and S12 plays an important role in translational accuracy.</text>
</comment>
<comment type="subunit">
    <text evidence="1">Part of the 30S ribosomal subunit. Contacts protein S5. The interaction surface between S4 and S5 is involved in control of translational fidelity.</text>
</comment>
<comment type="similarity">
    <text evidence="1">Belongs to the universal ribosomal protein uS4 family.</text>
</comment>
<accession>Q890Q9</accession>
<proteinExistence type="inferred from homology"/>
<protein>
    <recommendedName>
        <fullName evidence="1">Small ribosomal subunit protein uS4</fullName>
    </recommendedName>
    <alternativeName>
        <fullName evidence="2">30S ribosomal protein S4</fullName>
    </alternativeName>
</protein>
<keyword id="KW-1185">Reference proteome</keyword>
<keyword id="KW-0687">Ribonucleoprotein</keyword>
<keyword id="KW-0689">Ribosomal protein</keyword>
<keyword id="KW-0694">RNA-binding</keyword>
<keyword id="KW-0699">rRNA-binding</keyword>
<organism>
    <name type="scientific">Clostridium tetani (strain Massachusetts / E88)</name>
    <dbReference type="NCBI Taxonomy" id="212717"/>
    <lineage>
        <taxon>Bacteria</taxon>
        <taxon>Bacillati</taxon>
        <taxon>Bacillota</taxon>
        <taxon>Clostridia</taxon>
        <taxon>Eubacteriales</taxon>
        <taxon>Clostridiaceae</taxon>
        <taxon>Clostridium</taxon>
    </lineage>
</organism>
<sequence>MARYTEANCRLCRREGLKLYLKGDRCYTDKCAFSRRGYAPGQHGQSRKKISNYGLQLREKQKAKRIYGVLEKQFRTYYKRADKARGITGENLLVLLEMRLDNVVYRLGYGDSRKESRQLVTHGHFLVNGKKVNIPSFNVSVNDVITVSEKSRATEKFKTFIENPRTLPNWLEGNLENFEGKVVSQPSREDIDVPVNETLIVELYSK</sequence>
<dbReference type="EMBL" id="AE015927">
    <property type="protein sequence ID" value="AAO37036.1"/>
    <property type="molecule type" value="Genomic_DNA"/>
</dbReference>
<dbReference type="RefSeq" id="WP_011100697.1">
    <property type="nucleotide sequence ID" value="NC_004557.1"/>
</dbReference>
<dbReference type="SMR" id="Q890Q9"/>
<dbReference type="STRING" id="212717.CTC_02579"/>
<dbReference type="GeneID" id="24253945"/>
<dbReference type="KEGG" id="ctc:CTC_02579"/>
<dbReference type="HOGENOM" id="CLU_092403_0_2_9"/>
<dbReference type="OrthoDB" id="9803672at2"/>
<dbReference type="Proteomes" id="UP000001412">
    <property type="component" value="Chromosome"/>
</dbReference>
<dbReference type="GO" id="GO:0015935">
    <property type="term" value="C:small ribosomal subunit"/>
    <property type="evidence" value="ECO:0007669"/>
    <property type="project" value="InterPro"/>
</dbReference>
<dbReference type="GO" id="GO:0019843">
    <property type="term" value="F:rRNA binding"/>
    <property type="evidence" value="ECO:0007669"/>
    <property type="project" value="UniProtKB-UniRule"/>
</dbReference>
<dbReference type="GO" id="GO:0003735">
    <property type="term" value="F:structural constituent of ribosome"/>
    <property type="evidence" value="ECO:0007669"/>
    <property type="project" value="InterPro"/>
</dbReference>
<dbReference type="GO" id="GO:0042274">
    <property type="term" value="P:ribosomal small subunit biogenesis"/>
    <property type="evidence" value="ECO:0007669"/>
    <property type="project" value="TreeGrafter"/>
</dbReference>
<dbReference type="GO" id="GO:0006412">
    <property type="term" value="P:translation"/>
    <property type="evidence" value="ECO:0007669"/>
    <property type="project" value="UniProtKB-UniRule"/>
</dbReference>
<dbReference type="CDD" id="cd00165">
    <property type="entry name" value="S4"/>
    <property type="match status" value="1"/>
</dbReference>
<dbReference type="FunFam" id="1.10.1050.10:FF:000001">
    <property type="entry name" value="30S ribosomal protein S4"/>
    <property type="match status" value="1"/>
</dbReference>
<dbReference type="FunFam" id="3.10.290.10:FF:000001">
    <property type="entry name" value="30S ribosomal protein S4"/>
    <property type="match status" value="1"/>
</dbReference>
<dbReference type="Gene3D" id="1.10.1050.10">
    <property type="entry name" value="Ribosomal Protein S4 Delta 41, Chain A, domain 1"/>
    <property type="match status" value="1"/>
</dbReference>
<dbReference type="Gene3D" id="3.10.290.10">
    <property type="entry name" value="RNA-binding S4 domain"/>
    <property type="match status" value="1"/>
</dbReference>
<dbReference type="HAMAP" id="MF_01306_B">
    <property type="entry name" value="Ribosomal_uS4_B"/>
    <property type="match status" value="1"/>
</dbReference>
<dbReference type="InterPro" id="IPR022801">
    <property type="entry name" value="Ribosomal_uS4"/>
</dbReference>
<dbReference type="InterPro" id="IPR005709">
    <property type="entry name" value="Ribosomal_uS4_bac-type"/>
</dbReference>
<dbReference type="InterPro" id="IPR018079">
    <property type="entry name" value="Ribosomal_uS4_CS"/>
</dbReference>
<dbReference type="InterPro" id="IPR001912">
    <property type="entry name" value="Ribosomal_uS4_N"/>
</dbReference>
<dbReference type="InterPro" id="IPR002942">
    <property type="entry name" value="S4_RNA-bd"/>
</dbReference>
<dbReference type="InterPro" id="IPR036986">
    <property type="entry name" value="S4_RNA-bd_sf"/>
</dbReference>
<dbReference type="NCBIfam" id="NF003717">
    <property type="entry name" value="PRK05327.1"/>
    <property type="match status" value="1"/>
</dbReference>
<dbReference type="NCBIfam" id="TIGR01017">
    <property type="entry name" value="rpsD_bact"/>
    <property type="match status" value="1"/>
</dbReference>
<dbReference type="PANTHER" id="PTHR11831">
    <property type="entry name" value="30S 40S RIBOSOMAL PROTEIN"/>
    <property type="match status" value="1"/>
</dbReference>
<dbReference type="PANTHER" id="PTHR11831:SF4">
    <property type="entry name" value="SMALL RIBOSOMAL SUBUNIT PROTEIN US4M"/>
    <property type="match status" value="1"/>
</dbReference>
<dbReference type="Pfam" id="PF00163">
    <property type="entry name" value="Ribosomal_S4"/>
    <property type="match status" value="1"/>
</dbReference>
<dbReference type="Pfam" id="PF01479">
    <property type="entry name" value="S4"/>
    <property type="match status" value="1"/>
</dbReference>
<dbReference type="SMART" id="SM01390">
    <property type="entry name" value="Ribosomal_S4"/>
    <property type="match status" value="1"/>
</dbReference>
<dbReference type="SMART" id="SM00363">
    <property type="entry name" value="S4"/>
    <property type="match status" value="1"/>
</dbReference>
<dbReference type="SUPFAM" id="SSF55174">
    <property type="entry name" value="Alpha-L RNA-binding motif"/>
    <property type="match status" value="1"/>
</dbReference>
<dbReference type="PROSITE" id="PS00632">
    <property type="entry name" value="RIBOSOMAL_S4"/>
    <property type="match status" value="1"/>
</dbReference>
<dbReference type="PROSITE" id="PS50889">
    <property type="entry name" value="S4"/>
    <property type="match status" value="1"/>
</dbReference>